<evidence type="ECO:0000250" key="1">
    <source>
        <dbReference type="UniProtKB" id="P0DKY7"/>
    </source>
</evidence>
<evidence type="ECO:0000255" key="2">
    <source>
        <dbReference type="HAMAP-Rule" id="MF_00167"/>
    </source>
</evidence>
<name>CSRA_PECPM</name>
<comment type="function">
    <text evidence="2">A key translational regulator that binds mRNA to regulate translation initiation and/or mRNA stability. Mediates global changes in gene expression, shifting from rapid growth to stress survival by linking envelope stress, the stringent response and the catabolite repression systems. Usually binds in the 5'-UTR; binding at or near the Shine-Dalgarno sequence prevents ribosome-binding, repressing translation, binding elsewhere in the 5'-UTR can activate translation and/or stabilize the mRNA. Its function is antagonized by small RNA(s).</text>
</comment>
<comment type="function">
    <text evidence="1">Controls extracellular enzymes, N-(3-oxohexanoyl)-L-homoserine lactone, and pathogenicity. Repressor of virulence factors (By similarity).</text>
</comment>
<comment type="subunit">
    <text evidence="2">Homodimer; the beta-strands of each monomer intercalate to form a hydrophobic core, while the alpha-helices form wings that extend away from the core.</text>
</comment>
<comment type="subcellular location">
    <subcellularLocation>
        <location evidence="2">Cytoplasm</location>
    </subcellularLocation>
</comment>
<comment type="similarity">
    <text evidence="2">Belongs to the CsrA/RsmA family.</text>
</comment>
<reference key="1">
    <citation type="submission" date="1999-05" db="EMBL/GenBank/DDBJ databases">
        <authorList>
            <person name="Andersson R.A."/>
        </authorList>
    </citation>
    <scope>NUCLEOTIDE SEQUENCE [GENOMIC DNA]</scope>
    <source>
        <strain>SCC3193</strain>
    </source>
</reference>
<reference key="2">
    <citation type="journal article" date="2012" name="J. Bacteriol.">
        <title>Genome sequence of Pectobacterium sp. strain SCC3193.</title>
        <authorList>
            <person name="Koskinen J.P."/>
            <person name="Laine P."/>
            <person name="Niemi O."/>
            <person name="Nykyri J."/>
            <person name="Harjunpaa H."/>
            <person name="Auvinen P."/>
            <person name="Paulin L."/>
            <person name="Pirhonen M."/>
            <person name="Palva T."/>
            <person name="Holm L."/>
        </authorList>
    </citation>
    <scope>NUCLEOTIDE SEQUENCE [LARGE SCALE GENOMIC DNA]</scope>
    <source>
        <strain>SCC3193</strain>
    </source>
</reference>
<organism>
    <name type="scientific">Pectobacterium parmentieri</name>
    <dbReference type="NCBI Taxonomy" id="1905730"/>
    <lineage>
        <taxon>Bacteria</taxon>
        <taxon>Pseudomonadati</taxon>
        <taxon>Pseudomonadota</taxon>
        <taxon>Gammaproteobacteria</taxon>
        <taxon>Enterobacterales</taxon>
        <taxon>Pectobacteriaceae</taxon>
        <taxon>Pectobacterium</taxon>
    </lineage>
</organism>
<dbReference type="EMBL" id="AJ238885">
    <property type="protein sequence ID" value="CAB46440.1"/>
    <property type="molecule type" value="Genomic_DNA"/>
</dbReference>
<dbReference type="EMBL" id="CP003415">
    <property type="protein sequence ID" value="AFI89127.1"/>
    <property type="molecule type" value="Genomic_DNA"/>
</dbReference>
<dbReference type="RefSeq" id="WP_005972168.1">
    <property type="nucleotide sequence ID" value="NZ_WABU01000008.1"/>
</dbReference>
<dbReference type="SMR" id="K4FF95"/>
<dbReference type="STRING" id="1905730.W5S_1009"/>
<dbReference type="GeneID" id="97765890"/>
<dbReference type="KEGG" id="pec:W5S_1009"/>
<dbReference type="PATRIC" id="fig|1166016.3.peg.1022"/>
<dbReference type="eggNOG" id="COG1551">
    <property type="taxonomic scope" value="Bacteria"/>
</dbReference>
<dbReference type="HOGENOM" id="CLU_164837_2_1_6"/>
<dbReference type="OMA" id="VYRKEVY"/>
<dbReference type="OrthoDB" id="9809061at2"/>
<dbReference type="Proteomes" id="UP000008044">
    <property type="component" value="Chromosome"/>
</dbReference>
<dbReference type="GO" id="GO:0005829">
    <property type="term" value="C:cytosol"/>
    <property type="evidence" value="ECO:0007669"/>
    <property type="project" value="TreeGrafter"/>
</dbReference>
<dbReference type="GO" id="GO:0048027">
    <property type="term" value="F:mRNA 5'-UTR binding"/>
    <property type="evidence" value="ECO:0007669"/>
    <property type="project" value="UniProtKB-UniRule"/>
</dbReference>
<dbReference type="GO" id="GO:0006402">
    <property type="term" value="P:mRNA catabolic process"/>
    <property type="evidence" value="ECO:0007669"/>
    <property type="project" value="InterPro"/>
</dbReference>
<dbReference type="GO" id="GO:0045947">
    <property type="term" value="P:negative regulation of translational initiation"/>
    <property type="evidence" value="ECO:0007669"/>
    <property type="project" value="UniProtKB-UniRule"/>
</dbReference>
<dbReference type="GO" id="GO:0045948">
    <property type="term" value="P:positive regulation of translational initiation"/>
    <property type="evidence" value="ECO:0007669"/>
    <property type="project" value="UniProtKB-UniRule"/>
</dbReference>
<dbReference type="GO" id="GO:0006109">
    <property type="term" value="P:regulation of carbohydrate metabolic process"/>
    <property type="evidence" value="ECO:0007669"/>
    <property type="project" value="UniProtKB-UniRule"/>
</dbReference>
<dbReference type="FunFam" id="2.60.40.4380:FF:000001">
    <property type="entry name" value="Translational regulator CsrA"/>
    <property type="match status" value="1"/>
</dbReference>
<dbReference type="Gene3D" id="2.60.40.4380">
    <property type="entry name" value="Translational regulator CsrA"/>
    <property type="match status" value="1"/>
</dbReference>
<dbReference type="HAMAP" id="MF_00167">
    <property type="entry name" value="CsrA"/>
    <property type="match status" value="1"/>
</dbReference>
<dbReference type="InterPro" id="IPR003751">
    <property type="entry name" value="CsrA"/>
</dbReference>
<dbReference type="InterPro" id="IPR036107">
    <property type="entry name" value="CsrA_sf"/>
</dbReference>
<dbReference type="NCBIfam" id="TIGR00202">
    <property type="entry name" value="csrA"/>
    <property type="match status" value="1"/>
</dbReference>
<dbReference type="NCBIfam" id="NF002469">
    <property type="entry name" value="PRK01712.1"/>
    <property type="match status" value="1"/>
</dbReference>
<dbReference type="PANTHER" id="PTHR34984">
    <property type="entry name" value="CARBON STORAGE REGULATOR"/>
    <property type="match status" value="1"/>
</dbReference>
<dbReference type="PANTHER" id="PTHR34984:SF1">
    <property type="entry name" value="CARBON STORAGE REGULATOR"/>
    <property type="match status" value="1"/>
</dbReference>
<dbReference type="Pfam" id="PF02599">
    <property type="entry name" value="CsrA"/>
    <property type="match status" value="1"/>
</dbReference>
<dbReference type="SUPFAM" id="SSF117130">
    <property type="entry name" value="CsrA-like"/>
    <property type="match status" value="1"/>
</dbReference>
<feature type="chain" id="PRO_0000421829" description="Translational regulator CsrA">
    <location>
        <begin position="1"/>
        <end position="61"/>
    </location>
</feature>
<keyword id="KW-0010">Activator</keyword>
<keyword id="KW-0963">Cytoplasm</keyword>
<keyword id="KW-0678">Repressor</keyword>
<keyword id="KW-0694">RNA-binding</keyword>
<keyword id="KW-0810">Translation regulation</keyword>
<protein>
    <recommendedName>
        <fullName evidence="2">Translational regulator CsrA</fullName>
    </recommendedName>
    <alternativeName>
        <fullName evidence="2">Carbon storage regulator</fullName>
    </alternativeName>
    <alternativeName>
        <fullName>Repressor RsmA</fullName>
    </alternativeName>
</protein>
<proteinExistence type="inferred from homology"/>
<accession>K4FF95</accession>
<accession>Q47620</accession>
<accession>Q9XB50</accession>
<sequence>MLILTRRVGETLMIGDEVTVTVLGVKGNQVRIGVNAPKEVSVHREEIYQRIQAEKSQPTSY</sequence>
<gene>
    <name evidence="2" type="primary">csrA</name>
    <name type="synonym">rsmA</name>
    <name type="ordered locus">W5S_1009</name>
</gene>